<accession>P60273</accession>
<reference key="1">
    <citation type="journal article" date="2002" name="J. Biol. Chem.">
        <title>Solution structure of peptide toxins that block mechanosensitive ion channels.</title>
        <authorList>
            <person name="Oswald R.E."/>
            <person name="Suchyna T.M."/>
            <person name="McFeeters R."/>
            <person name="Gottlieb P.A."/>
            <person name="Sachs F."/>
        </authorList>
    </citation>
    <scope>PROTEIN SEQUENCE</scope>
    <scope>STRUCTURE BY NMR</scope>
    <scope>DISULFIDE BONDS</scope>
    <scope>SUBCELLULAR LOCATION</scope>
</reference>
<dbReference type="PDB" id="1LUP">
    <property type="method" value="NMR"/>
    <property type="chains" value="A=1-31"/>
</dbReference>
<dbReference type="PDBsum" id="1LUP"/>
<dbReference type="SMR" id="P60273"/>
<dbReference type="ArachnoServer" id="AS000067">
    <property type="toxin name" value="kappa-theraphotoxin-Gr2a"/>
</dbReference>
<dbReference type="EvolutionaryTrace" id="P60273"/>
<dbReference type="GO" id="GO:0005576">
    <property type="term" value="C:extracellular region"/>
    <property type="evidence" value="ECO:0007669"/>
    <property type="project" value="UniProtKB-SubCell"/>
</dbReference>
<dbReference type="GO" id="GO:0008200">
    <property type="term" value="F:ion channel inhibitor activity"/>
    <property type="evidence" value="ECO:0007669"/>
    <property type="project" value="InterPro"/>
</dbReference>
<dbReference type="GO" id="GO:0015459">
    <property type="term" value="F:potassium channel regulator activity"/>
    <property type="evidence" value="ECO:0007669"/>
    <property type="project" value="UniProtKB-KW"/>
</dbReference>
<dbReference type="GO" id="GO:0090729">
    <property type="term" value="F:toxin activity"/>
    <property type="evidence" value="ECO:0007669"/>
    <property type="project" value="UniProtKB-KW"/>
</dbReference>
<dbReference type="InterPro" id="IPR011696">
    <property type="entry name" value="Huwentoxin-1"/>
</dbReference>
<dbReference type="Pfam" id="PF07740">
    <property type="entry name" value="Toxin_12"/>
    <property type="match status" value="1"/>
</dbReference>
<dbReference type="SUPFAM" id="SSF57059">
    <property type="entry name" value="omega toxin-like"/>
    <property type="match status" value="1"/>
</dbReference>
<feature type="peptide" id="PRO_0000045014" description="Kappa-theraphotoxin-Gr2a" evidence="2">
    <location>
        <begin position="1"/>
        <end position="31"/>
    </location>
</feature>
<feature type="disulfide bond" evidence="2 6">
    <location>
        <begin position="2"/>
        <end position="16"/>
    </location>
</feature>
<feature type="disulfide bond" evidence="2 6">
    <location>
        <begin position="9"/>
        <end position="21"/>
    </location>
</feature>
<feature type="disulfide bond" evidence="2 6">
    <location>
        <begin position="15"/>
        <end position="25"/>
    </location>
</feature>
<feature type="strand" evidence="7">
    <location>
        <begin position="4"/>
        <end position="6"/>
    </location>
</feature>
<feature type="strand" evidence="7">
    <location>
        <begin position="17"/>
        <end position="20"/>
    </location>
</feature>
<feature type="strand" evidence="7">
    <location>
        <begin position="22"/>
        <end position="24"/>
    </location>
</feature>
<sequence>YCQKWMWTCDEERKCCEGLVCRLWCKRIINM</sequence>
<protein>
    <recommendedName>
        <fullName evidence="4">Kappa-theraphotoxin-Gr2a</fullName>
        <shortName evidence="4">Kappa-TRTX-Gr2a</shortName>
    </recommendedName>
    <alternativeName>
        <fullName evidence="3">Toxin GsMTx-2</fullName>
        <shortName evidence="3">MTx2</shortName>
    </alternativeName>
</protein>
<keyword id="KW-0002">3D-structure</keyword>
<keyword id="KW-0903">Direct protein sequencing</keyword>
<keyword id="KW-1015">Disulfide bond</keyword>
<keyword id="KW-0872">Ion channel impairing toxin</keyword>
<keyword id="KW-0960">Knottin</keyword>
<keyword id="KW-0528">Neurotoxin</keyword>
<keyword id="KW-0632">Potassium channel impairing toxin</keyword>
<keyword id="KW-0964">Secreted</keyword>
<keyword id="KW-0800">Toxin</keyword>
<keyword id="KW-1220">Voltage-gated potassium channel impairing toxin</keyword>
<evidence type="ECO:0000250" key="1">
    <source>
        <dbReference type="UniProtKB" id="P61231"/>
    </source>
</evidence>
<evidence type="ECO:0000269" key="2">
    <source>
    </source>
</evidence>
<evidence type="ECO:0000303" key="3">
    <source>
    </source>
</evidence>
<evidence type="ECO:0000305" key="4"/>
<evidence type="ECO:0000305" key="5">
    <source>
    </source>
</evidence>
<evidence type="ECO:0007744" key="6">
    <source>
        <dbReference type="PDB" id="1LUP"/>
    </source>
</evidence>
<evidence type="ECO:0007829" key="7">
    <source>
        <dbReference type="PDB" id="1LUP"/>
    </source>
</evidence>
<proteinExistence type="evidence at protein level"/>
<name>MTX2_GRARO</name>
<comment type="function">
    <text evidence="1">Blocks mammalian Kv4.2/KCND2 and Kv4.3/KCND3 (By similarity). Blocks mechanosensitive ion channels in rat astrocytes, without having effect on whole-cell voltage-sensitive currents (By similarity).</text>
</comment>
<comment type="subcellular location">
    <subcellularLocation>
        <location evidence="2">Secreted</location>
    </subcellularLocation>
</comment>
<comment type="tissue specificity">
    <text evidence="5">Expressed by the venom gland.</text>
</comment>
<comment type="domain">
    <text evidence="2">The presence of a 'disulfide through disulfide knot' structurally defines this protein as a knottin.</text>
</comment>
<comment type="miscellaneous">
    <text evidence="4">The primary structure of this mature peptide is identical to that of kappa-theraphotoxin-Ps1b (Phrixotoxin-2) from Paraphysa scrofa (AC P61231).</text>
</comment>
<comment type="similarity">
    <text evidence="4">Belongs to the neurotoxin 30 (phrixotoxin) family.</text>
</comment>
<organism>
    <name type="scientific">Grammostola rosea</name>
    <name type="common">Chilean rose tarantula</name>
    <name type="synonym">Grammostola spatulata</name>
    <dbReference type="NCBI Taxonomy" id="432528"/>
    <lineage>
        <taxon>Eukaryota</taxon>
        <taxon>Metazoa</taxon>
        <taxon>Ecdysozoa</taxon>
        <taxon>Arthropoda</taxon>
        <taxon>Chelicerata</taxon>
        <taxon>Arachnida</taxon>
        <taxon>Araneae</taxon>
        <taxon>Mygalomorphae</taxon>
        <taxon>Theraphosidae</taxon>
        <taxon>Grammostola</taxon>
    </lineage>
</organism>